<evidence type="ECO:0000255" key="1">
    <source>
        <dbReference type="HAMAP-Rule" id="MF_00693"/>
    </source>
</evidence>
<accession>Q7MGF9</accession>
<feature type="chain" id="PRO_0000175930" description="Probable transcriptional regulatory protein VVA0010">
    <location>
        <begin position="1"/>
        <end position="238"/>
    </location>
</feature>
<sequence>MGRSFEVRKASMAKTAGAKIKVYSKYGKEIYVCAKNGGIDPDMNLSLRHLITKAKKDQVPSHVIEKALDKASGGGGEDYQPARYEGFGPGGISVIVDCLTDNGNRTFQDVRQCFVKTGAKIGTPGVVAHMFDHQAVFQFKGDDEESFLEALMMADCDVTDIELEDGVITIYAPNTEFFKVKTALNTEFPDLVIDVEEITFVPQNYSPVPEEDAEKFQKFLDMLDDCDDVQQVYHNAEM</sequence>
<dbReference type="EMBL" id="BA000038">
    <property type="protein sequence ID" value="BAC96036.1"/>
    <property type="molecule type" value="Genomic_DNA"/>
</dbReference>
<dbReference type="RefSeq" id="WP_011082076.1">
    <property type="nucleotide sequence ID" value="NC_005140.1"/>
</dbReference>
<dbReference type="SMR" id="Q7MGF9"/>
<dbReference type="STRING" id="672.VV93_v1c30210"/>
<dbReference type="KEGG" id="vvy:VVA0010"/>
<dbReference type="eggNOG" id="COG0217">
    <property type="taxonomic scope" value="Bacteria"/>
</dbReference>
<dbReference type="HOGENOM" id="CLU_062974_2_0_6"/>
<dbReference type="Proteomes" id="UP000002675">
    <property type="component" value="Chromosome II"/>
</dbReference>
<dbReference type="GO" id="GO:0005829">
    <property type="term" value="C:cytosol"/>
    <property type="evidence" value="ECO:0007669"/>
    <property type="project" value="TreeGrafter"/>
</dbReference>
<dbReference type="GO" id="GO:0003677">
    <property type="term" value="F:DNA binding"/>
    <property type="evidence" value="ECO:0007669"/>
    <property type="project" value="UniProtKB-UniRule"/>
</dbReference>
<dbReference type="GO" id="GO:0006355">
    <property type="term" value="P:regulation of DNA-templated transcription"/>
    <property type="evidence" value="ECO:0007669"/>
    <property type="project" value="UniProtKB-UniRule"/>
</dbReference>
<dbReference type="FunFam" id="1.10.10.200:FF:000003">
    <property type="entry name" value="Probable transcriptional regulatory protein YeeN"/>
    <property type="match status" value="1"/>
</dbReference>
<dbReference type="Gene3D" id="1.10.10.200">
    <property type="match status" value="1"/>
</dbReference>
<dbReference type="Gene3D" id="3.30.70.980">
    <property type="match status" value="2"/>
</dbReference>
<dbReference type="HAMAP" id="MF_00693">
    <property type="entry name" value="Transcrip_reg_TACO1"/>
    <property type="match status" value="1"/>
</dbReference>
<dbReference type="InterPro" id="IPR017856">
    <property type="entry name" value="Integrase-like_N"/>
</dbReference>
<dbReference type="InterPro" id="IPR048300">
    <property type="entry name" value="TACO1_YebC-like_2nd/3rd_dom"/>
</dbReference>
<dbReference type="InterPro" id="IPR049083">
    <property type="entry name" value="TACO1_YebC_N"/>
</dbReference>
<dbReference type="InterPro" id="IPR002876">
    <property type="entry name" value="Transcrip_reg_TACO1-like"/>
</dbReference>
<dbReference type="InterPro" id="IPR026564">
    <property type="entry name" value="Transcrip_reg_TACO1-like_dom3"/>
</dbReference>
<dbReference type="InterPro" id="IPR029072">
    <property type="entry name" value="YebC-like"/>
</dbReference>
<dbReference type="NCBIfam" id="NF009044">
    <property type="entry name" value="PRK12378.1"/>
    <property type="match status" value="1"/>
</dbReference>
<dbReference type="PANTHER" id="PTHR12532">
    <property type="entry name" value="TRANSLATIONAL ACTIVATOR OF CYTOCHROME C OXIDASE 1"/>
    <property type="match status" value="1"/>
</dbReference>
<dbReference type="PANTHER" id="PTHR12532:SF0">
    <property type="entry name" value="TRANSLATIONAL ACTIVATOR OF CYTOCHROME C OXIDASE 1"/>
    <property type="match status" value="1"/>
</dbReference>
<dbReference type="Pfam" id="PF20772">
    <property type="entry name" value="TACO1_YebC_N"/>
    <property type="match status" value="1"/>
</dbReference>
<dbReference type="Pfam" id="PF01709">
    <property type="entry name" value="Transcrip_reg"/>
    <property type="match status" value="1"/>
</dbReference>
<dbReference type="SUPFAM" id="SSF75625">
    <property type="entry name" value="YebC-like"/>
    <property type="match status" value="1"/>
</dbReference>
<proteinExistence type="inferred from homology"/>
<organism>
    <name type="scientific">Vibrio vulnificus (strain YJ016)</name>
    <dbReference type="NCBI Taxonomy" id="196600"/>
    <lineage>
        <taxon>Bacteria</taxon>
        <taxon>Pseudomonadati</taxon>
        <taxon>Pseudomonadota</taxon>
        <taxon>Gammaproteobacteria</taxon>
        <taxon>Vibrionales</taxon>
        <taxon>Vibrionaceae</taxon>
        <taxon>Vibrio</taxon>
    </lineage>
</organism>
<gene>
    <name type="ordered locus">VVA0010</name>
</gene>
<protein>
    <recommendedName>
        <fullName evidence="1">Probable transcriptional regulatory protein VVA0010</fullName>
    </recommendedName>
</protein>
<reference key="1">
    <citation type="journal article" date="2003" name="Genome Res.">
        <title>Comparative genome analysis of Vibrio vulnificus, a marine pathogen.</title>
        <authorList>
            <person name="Chen C.-Y."/>
            <person name="Wu K.-M."/>
            <person name="Chang Y.-C."/>
            <person name="Chang C.-H."/>
            <person name="Tsai H.-C."/>
            <person name="Liao T.-L."/>
            <person name="Liu Y.-M."/>
            <person name="Chen H.-J."/>
            <person name="Shen A.B.-T."/>
            <person name="Li J.-C."/>
            <person name="Su T.-L."/>
            <person name="Shao C.-P."/>
            <person name="Lee C.-T."/>
            <person name="Hor L.-I."/>
            <person name="Tsai S.-F."/>
        </authorList>
    </citation>
    <scope>NUCLEOTIDE SEQUENCE [LARGE SCALE GENOMIC DNA]</scope>
    <source>
        <strain>YJ016</strain>
    </source>
</reference>
<name>Y4010_VIBVY</name>
<keyword id="KW-0963">Cytoplasm</keyword>
<keyword id="KW-0238">DNA-binding</keyword>
<keyword id="KW-0804">Transcription</keyword>
<keyword id="KW-0805">Transcription regulation</keyword>
<comment type="subcellular location">
    <subcellularLocation>
        <location evidence="1">Cytoplasm</location>
    </subcellularLocation>
</comment>
<comment type="similarity">
    <text evidence="1">Belongs to the TACO1 family.</text>
</comment>